<dbReference type="EMBL" id="D86839">
    <property type="protein sequence ID" value="BAA13171.1"/>
    <property type="molecule type" value="Genomic_DNA"/>
</dbReference>
<dbReference type="EMBL" id="D86580">
    <property type="protein sequence ID" value="BAA13127.1"/>
    <property type="molecule type" value="mRNA"/>
</dbReference>
<dbReference type="EMBL" id="BC088117">
    <property type="protein sequence ID" value="AAH88117.1"/>
    <property type="molecule type" value="mRNA"/>
</dbReference>
<dbReference type="RefSeq" id="NP_476474.1">
    <property type="nucleotide sequence ID" value="NM_057133.1"/>
</dbReference>
<dbReference type="PDB" id="1YP0">
    <property type="method" value="X-ray"/>
    <property type="resolution" value="1.50 A"/>
    <property type="chains" value="B=17-28"/>
</dbReference>
<dbReference type="PDB" id="1ZGY">
    <property type="method" value="X-ray"/>
    <property type="resolution" value="1.80 A"/>
    <property type="chains" value="B=115-131"/>
</dbReference>
<dbReference type="PDB" id="1ZH7">
    <property type="method" value="X-ray"/>
    <property type="resolution" value="2.50 A"/>
    <property type="chains" value="C/D=16-26"/>
</dbReference>
<dbReference type="PDBsum" id="1YP0"/>
<dbReference type="PDBsum" id="1ZGY"/>
<dbReference type="PDBsum" id="1ZH7"/>
<dbReference type="SMR" id="P97947"/>
<dbReference type="BioGRID" id="250721">
    <property type="interactions" value="4"/>
</dbReference>
<dbReference type="CORUM" id="P97947"/>
<dbReference type="DIP" id="DIP-46314N"/>
<dbReference type="FunCoup" id="P97947">
    <property type="interactions" value="83"/>
</dbReference>
<dbReference type="IntAct" id="P97947">
    <property type="interactions" value="3"/>
</dbReference>
<dbReference type="STRING" id="10116.ENSRNOP00000009683"/>
<dbReference type="PhosphoSitePlus" id="P97947"/>
<dbReference type="PaxDb" id="10116-ENSRNOP00000009683"/>
<dbReference type="Ensembl" id="ENSRNOT00000009683.3">
    <property type="protein sequence ID" value="ENSRNOP00000009683.1"/>
    <property type="gene ID" value="ENSRNOG00000007229.3"/>
</dbReference>
<dbReference type="GeneID" id="117274"/>
<dbReference type="KEGG" id="rno:117274"/>
<dbReference type="UCSC" id="RGD:621032">
    <property type="organism name" value="rat"/>
</dbReference>
<dbReference type="AGR" id="RGD:621032"/>
<dbReference type="CTD" id="8431"/>
<dbReference type="RGD" id="621032">
    <property type="gene designation" value="Nr0b2"/>
</dbReference>
<dbReference type="eggNOG" id="KOG3575">
    <property type="taxonomic scope" value="Eukaryota"/>
</dbReference>
<dbReference type="GeneTree" id="ENSGT00390000015719"/>
<dbReference type="HOGENOM" id="CLU_093194_0_0_1"/>
<dbReference type="InParanoid" id="P97947"/>
<dbReference type="OMA" id="FFRPIVG"/>
<dbReference type="OrthoDB" id="9926883at2759"/>
<dbReference type="PhylomeDB" id="P97947"/>
<dbReference type="TreeFam" id="TF332386"/>
<dbReference type="Reactome" id="R-RNO-383280">
    <property type="pathway name" value="Nuclear Receptor transcription pathway"/>
</dbReference>
<dbReference type="EvolutionaryTrace" id="P97947"/>
<dbReference type="PRO" id="PR:P97947"/>
<dbReference type="Proteomes" id="UP000002494">
    <property type="component" value="Chromosome 5"/>
</dbReference>
<dbReference type="Bgee" id="ENSRNOG00000007229">
    <property type="expression patterns" value="Expressed in stomach and 16 other cell types or tissues"/>
</dbReference>
<dbReference type="GO" id="GO:0000785">
    <property type="term" value="C:chromatin"/>
    <property type="evidence" value="ECO:0000266"/>
    <property type="project" value="RGD"/>
</dbReference>
<dbReference type="GO" id="GO:0005737">
    <property type="term" value="C:cytoplasm"/>
    <property type="evidence" value="ECO:0000250"/>
    <property type="project" value="UniProtKB"/>
</dbReference>
<dbReference type="GO" id="GO:0005654">
    <property type="term" value="C:nucleoplasm"/>
    <property type="evidence" value="ECO:0007669"/>
    <property type="project" value="Ensembl"/>
</dbReference>
<dbReference type="GO" id="GO:0005634">
    <property type="term" value="C:nucleus"/>
    <property type="evidence" value="ECO:0000250"/>
    <property type="project" value="UniProtKB"/>
</dbReference>
<dbReference type="GO" id="GO:0032991">
    <property type="term" value="C:protein-containing complex"/>
    <property type="evidence" value="ECO:0000314"/>
    <property type="project" value="RGD"/>
</dbReference>
<dbReference type="GO" id="GO:0042974">
    <property type="term" value="F:nuclear retinoic acid receptor binding"/>
    <property type="evidence" value="ECO:0000353"/>
    <property type="project" value="RGD"/>
</dbReference>
<dbReference type="GO" id="GO:0046965">
    <property type="term" value="F:nuclear retinoid X receptor binding"/>
    <property type="evidence" value="ECO:0000353"/>
    <property type="project" value="RGD"/>
</dbReference>
<dbReference type="GO" id="GO:0046966">
    <property type="term" value="F:nuclear thyroid hormone receptor binding"/>
    <property type="evidence" value="ECO:0000353"/>
    <property type="project" value="RGD"/>
</dbReference>
<dbReference type="GO" id="GO:0042975">
    <property type="term" value="F:peroxisome proliferator activated receptor binding"/>
    <property type="evidence" value="ECO:0000353"/>
    <property type="project" value="RGD"/>
</dbReference>
<dbReference type="GO" id="GO:0019904">
    <property type="term" value="F:protein domain specific binding"/>
    <property type="evidence" value="ECO:0000266"/>
    <property type="project" value="RGD"/>
</dbReference>
<dbReference type="GO" id="GO:0042803">
    <property type="term" value="F:protein homodimerization activity"/>
    <property type="evidence" value="ECO:0000266"/>
    <property type="project" value="RGD"/>
</dbReference>
<dbReference type="GO" id="GO:0044877">
    <property type="term" value="F:protein-containing complex binding"/>
    <property type="evidence" value="ECO:0000314"/>
    <property type="project" value="RGD"/>
</dbReference>
<dbReference type="GO" id="GO:0003714">
    <property type="term" value="F:transcription corepressor activity"/>
    <property type="evidence" value="ECO:0000250"/>
    <property type="project" value="UniProtKB"/>
</dbReference>
<dbReference type="GO" id="GO:0140416">
    <property type="term" value="F:transcription regulator inhibitor activity"/>
    <property type="evidence" value="ECO:0000266"/>
    <property type="project" value="RGD"/>
</dbReference>
<dbReference type="GO" id="GO:0031100">
    <property type="term" value="P:animal organ regeneration"/>
    <property type="evidence" value="ECO:0000270"/>
    <property type="project" value="RGD"/>
</dbReference>
<dbReference type="GO" id="GO:0032922">
    <property type="term" value="P:circadian regulation of gene expression"/>
    <property type="evidence" value="ECO:0000250"/>
    <property type="project" value="UniProtKB"/>
</dbReference>
<dbReference type="GO" id="GO:0007623">
    <property type="term" value="P:circadian rhythm"/>
    <property type="evidence" value="ECO:0000266"/>
    <property type="project" value="RGD"/>
</dbReference>
<dbReference type="GO" id="GO:0043433">
    <property type="term" value="P:negative regulation of DNA-binding transcription factor activity"/>
    <property type="evidence" value="ECO:0000250"/>
    <property type="project" value="UniProtKB"/>
</dbReference>
<dbReference type="GO" id="GO:0045892">
    <property type="term" value="P:negative regulation of DNA-templated transcription"/>
    <property type="evidence" value="ECO:0000315"/>
    <property type="project" value="RGD"/>
</dbReference>
<dbReference type="GO" id="GO:0010629">
    <property type="term" value="P:negative regulation of gene expression"/>
    <property type="evidence" value="ECO:0000266"/>
    <property type="project" value="RGD"/>
</dbReference>
<dbReference type="GO" id="GO:0000122">
    <property type="term" value="P:negative regulation of transcription by RNA polymerase II"/>
    <property type="evidence" value="ECO:0000315"/>
    <property type="project" value="RGD"/>
</dbReference>
<dbReference type="GO" id="GO:0007219">
    <property type="term" value="P:Notch signaling pathway"/>
    <property type="evidence" value="ECO:0000266"/>
    <property type="project" value="RGD"/>
</dbReference>
<dbReference type="GO" id="GO:0045893">
    <property type="term" value="P:positive regulation of DNA-templated transcription"/>
    <property type="evidence" value="ECO:0000266"/>
    <property type="project" value="RGD"/>
</dbReference>
<dbReference type="GO" id="GO:0010628">
    <property type="term" value="P:positive regulation of gene expression"/>
    <property type="evidence" value="ECO:0000266"/>
    <property type="project" value="RGD"/>
</dbReference>
<dbReference type="GO" id="GO:0032024">
    <property type="term" value="P:positive regulation of insulin secretion"/>
    <property type="evidence" value="ECO:0000315"/>
    <property type="project" value="RGD"/>
</dbReference>
<dbReference type="GO" id="GO:0045471">
    <property type="term" value="P:response to ethanol"/>
    <property type="evidence" value="ECO:0000270"/>
    <property type="project" value="RGD"/>
</dbReference>
<dbReference type="GO" id="GO:0009749">
    <property type="term" value="P:response to glucose"/>
    <property type="evidence" value="ECO:0000315"/>
    <property type="project" value="RGD"/>
</dbReference>
<dbReference type="FunFam" id="1.10.565.10:FF:000028">
    <property type="entry name" value="Nuclear receptor subfamily 0 group B member 2"/>
    <property type="match status" value="1"/>
</dbReference>
<dbReference type="Gene3D" id="1.10.565.10">
    <property type="entry name" value="Retinoid X Receptor"/>
    <property type="match status" value="1"/>
</dbReference>
<dbReference type="IDEAL" id="IID50220"/>
<dbReference type="InterPro" id="IPR035500">
    <property type="entry name" value="NHR-like_dom_sf"/>
</dbReference>
<dbReference type="InterPro" id="IPR033544">
    <property type="entry name" value="NR0B1/2"/>
</dbReference>
<dbReference type="InterPro" id="IPR000536">
    <property type="entry name" value="Nucl_hrmn_rcpt_lig-bd"/>
</dbReference>
<dbReference type="InterPro" id="IPR001723">
    <property type="entry name" value="Nuclear_hrmn_rcpt"/>
</dbReference>
<dbReference type="PANTHER" id="PTHR24081">
    <property type="entry name" value="NUCLEAR RECEPTOR SUBFAMILY 0 GROUP B"/>
    <property type="match status" value="1"/>
</dbReference>
<dbReference type="PANTHER" id="PTHR24081:SF0">
    <property type="entry name" value="NUCLEAR RECEPTOR SUBFAMILY 0 GROUP B MEMBER 2"/>
    <property type="match status" value="1"/>
</dbReference>
<dbReference type="Pfam" id="PF00104">
    <property type="entry name" value="Hormone_recep"/>
    <property type="match status" value="1"/>
</dbReference>
<dbReference type="PRINTS" id="PR00398">
    <property type="entry name" value="STRDHORMONER"/>
</dbReference>
<dbReference type="SMART" id="SM00430">
    <property type="entry name" value="HOLI"/>
    <property type="match status" value="1"/>
</dbReference>
<dbReference type="SUPFAM" id="SSF48508">
    <property type="entry name" value="Nuclear receptor ligand-binding domain"/>
    <property type="match status" value="1"/>
</dbReference>
<dbReference type="PROSITE" id="PS51843">
    <property type="entry name" value="NR_LBD"/>
    <property type="match status" value="1"/>
</dbReference>
<accession>P97947</accession>
<protein>
    <recommendedName>
        <fullName>Nuclear receptor subfamily 0 group B member 2</fullName>
    </recommendedName>
    <alternativeName>
        <fullName>Orphan nuclear receptor SHP</fullName>
    </alternativeName>
    <alternativeName>
        <fullName>Small heterodimer partner</fullName>
    </alternativeName>
</protein>
<proteinExistence type="evidence at protein level"/>
<name>NR0B2_RAT</name>
<gene>
    <name type="primary">Nr0b2</name>
    <name type="synonym">Shp</name>
</gene>
<sequence>MSSSQSGVCPCQGSASHPTILYTLLSPGPRTRPMAPASRSHCLCQQHRPVRLCAPHRTCREALDVLGKTVAFLRNLPSFCLLPHEDQRRLLEGCWGPLFLLGLAQDTVTFEVAEAPVPSILKKILLEEPNSGAQGAQPPDPPQPSLAAVQWLQHCLESFWSLELGPKEYAYLKGTILFNPDVPGLHASCHIAHLQQEAHWALCEVLEPWYPASQGRLARILLMASTLKNISCTLLVDLFFRPVIGDVDITELLEDMLLLR</sequence>
<evidence type="ECO:0000250" key="1">
    <source>
        <dbReference type="UniProtKB" id="Q15466"/>
    </source>
</evidence>
<evidence type="ECO:0000250" key="2">
    <source>
        <dbReference type="UniProtKB" id="Q62227"/>
    </source>
</evidence>
<evidence type="ECO:0000255" key="3">
    <source>
        <dbReference type="PROSITE-ProRule" id="PRU01189"/>
    </source>
</evidence>
<evidence type="ECO:0000269" key="4">
    <source>
    </source>
</evidence>
<evidence type="ECO:0000269" key="5">
    <source>
    </source>
</evidence>
<evidence type="ECO:0000269" key="6">
    <source>
    </source>
</evidence>
<evidence type="ECO:0000305" key="7"/>
<evidence type="ECO:0007829" key="8">
    <source>
        <dbReference type="PDB" id="1YP0"/>
    </source>
</evidence>
<evidence type="ECO:0007829" key="9">
    <source>
        <dbReference type="PDB" id="1ZGY"/>
    </source>
</evidence>
<organism>
    <name type="scientific">Rattus norvegicus</name>
    <name type="common">Rat</name>
    <dbReference type="NCBI Taxonomy" id="10116"/>
    <lineage>
        <taxon>Eukaryota</taxon>
        <taxon>Metazoa</taxon>
        <taxon>Chordata</taxon>
        <taxon>Craniata</taxon>
        <taxon>Vertebrata</taxon>
        <taxon>Euteleostomi</taxon>
        <taxon>Mammalia</taxon>
        <taxon>Eutheria</taxon>
        <taxon>Euarchontoglires</taxon>
        <taxon>Glires</taxon>
        <taxon>Rodentia</taxon>
        <taxon>Myomorpha</taxon>
        <taxon>Muroidea</taxon>
        <taxon>Muridae</taxon>
        <taxon>Murinae</taxon>
        <taxon>Rattus</taxon>
    </lineage>
</organism>
<reference key="1">
    <citation type="journal article" date="1997" name="Biochim. Biophys. Acta">
        <title>An orphan nuclear receptor lacking a zinc-finger DNA-binding domain: interaction with several nuclear receptors.</title>
        <authorList>
            <person name="Masuda N."/>
            <person name="Yasumo H."/>
            <person name="Tamura T."/>
            <person name="Hashiguchi N."/>
            <person name="Furusawa T."/>
            <person name="Tsukamoto T."/>
            <person name="Sadano H."/>
            <person name="Osumi T."/>
        </authorList>
    </citation>
    <scope>NUCLEOTIDE SEQUENCE [GENOMIC DNA / MRNA]</scope>
    <scope>INTERACTION WITH HNF4A; RARA; RXRA; PPARA AND THRB</scope>
    <scope>TISSUE SPECIFICITY</scope>
    <source>
        <strain>Fischer 344-Jcl</strain>
        <strain>Sprague-Dawley</strain>
        <tissue>Liver</tissue>
    </source>
</reference>
<reference key="2">
    <citation type="journal article" date="2004" name="Genome Res.">
        <title>The status, quality, and expansion of the NIH full-length cDNA project: the Mammalian Gene Collection (MGC).</title>
        <authorList>
            <consortium name="The MGC Project Team"/>
        </authorList>
    </citation>
    <scope>NUCLEOTIDE SEQUENCE [LARGE SCALE MRNA]</scope>
    <source>
        <tissue>Liver</tissue>
    </source>
</reference>
<reference key="3">
    <citation type="journal article" date="2005" name="Mol. Cell">
        <title>Crystallographic identification and functional characterization of phospholipids as ligands for the orphan nuclear receptor steroidogenic factor-1.</title>
        <authorList>
            <person name="Li Y."/>
            <person name="Choi M."/>
            <person name="Cavey G."/>
            <person name="Daugherty J."/>
            <person name="Suino K."/>
            <person name="Kovach A."/>
            <person name="Bingham N.C."/>
            <person name="Kliewer S.A."/>
            <person name="Xu H.E."/>
        </authorList>
    </citation>
    <scope>X-RAY CRYSTALLOGRAPHY (1.5 ANGSTROMS) OF 17-28 IN COMPLEX WITH NR5A1</scope>
</reference>
<reference key="4">
    <citation type="journal article" date="2005" name="Proc. Natl. Acad. Sci. U.S.A.">
        <title>Structural and biochemical basis for selective repression of the orphan nuclear receptor liver receptor homolog 1 by small heterodimer partner.</title>
        <authorList>
            <person name="Li Y."/>
            <person name="Choi M."/>
            <person name="Suino K."/>
            <person name="Kovach A."/>
            <person name="Daugherty J."/>
            <person name="Kliewer S.A."/>
            <person name="Xu H.E."/>
        </authorList>
    </citation>
    <scope>X-RAY CRYSTALLOGRAPHY (1.8 ANGSTROMS) OF 16-26 IN COMPLEX WITH NR5A2 AND OF 115-131 IN COMPLEX WITH PPARG</scope>
</reference>
<keyword id="KW-0002">3D-structure</keyword>
<keyword id="KW-0090">Biological rhythms</keyword>
<keyword id="KW-0963">Cytoplasm</keyword>
<keyword id="KW-0488">Methylation</keyword>
<keyword id="KW-0539">Nucleus</keyword>
<keyword id="KW-0675">Receptor</keyword>
<keyword id="KW-1185">Reference proteome</keyword>
<keyword id="KW-0678">Repressor</keyword>
<keyword id="KW-0804">Transcription</keyword>
<keyword id="KW-0805">Transcription regulation</keyword>
<comment type="function">
    <text evidence="1 2">Transcriptional regulator that acts as a negative regulator of receptor-dependent signaling pathways (By similarity). Specifically inhibits transactivation of the nuclear receptor with which it interacts (By similarity). Inhibits transcriptional activity of NEUROD1 on E-box-containing promoter by interfering with the coactivation function of the p300/CBP-mediated transcription complex for NEUROD1 (By similarity). Essential component of the liver circadian clock which via its interaction with NR1D1 and RORG regulates NPAS2-mediated hepatic lipid metabolism (By similarity). Regulates the circadian expression of cytochrome P450 (CYP) enzymes (By similarity). Represses: NR5A2 and HNF4A to down-regulate CYP2C38, NFLI3 to up-regulate CYP2A5, BHLHE41/HNF1A axis to up-regulate CYP1A2, CYP2E1 and CYP3A11, and NR1D1 to up-regulate CYP2B10, CYP4A10 and CYP4A14 (By similarity).</text>
</comment>
<comment type="subunit">
    <text evidence="1 2 4 5 6">Heterodimer; efficient DNA binding requires dimerization with another bHLH protein (By similarity). Interacts (via N-terminus) with NEUROD1 (via N-terminus and C-terminus) (By similarity). Interacts with ID2 (By similarity). Interacts with NR1I3 and EID1 (By similarity). Interacts with RARA, RXRA, THRB, NR5A1, NR5A2, PPARA and PPARG (PubMed:15721253, PubMed:15976031, PubMed:9003453). Interacts with RORG, NFIL3, NR1D1 and BHLHE41 (By similarity). Interacts with HNF4A; the resulting heterodimer is transcriptionally inactive (By similarity). Interacts with DDX3X; this interaction disrupts the interaction between HNF4 and NR0B2/SHP that forms inactive heterodimers and enhances the formation of active HNF4 homodimers (By similarity).</text>
</comment>
<comment type="subcellular location">
    <subcellularLocation>
        <location evidence="1">Cytoplasm</location>
    </subcellularLocation>
    <subcellularLocation>
        <location evidence="7">Nucleus</location>
    </subcellularLocation>
    <text evidence="1">Colocalizes with NEUROD1 in the nucleus.</text>
</comment>
<comment type="tissue specificity">
    <text evidence="6">Detected in kidney, testis, heart and liver.</text>
</comment>
<comment type="PTM">
    <text evidence="2">Arginine methylation by PRMT5 enhances repression activity of metabolic genes in liver in response to bile acid signaling, by increasing interaction with cofactors.</text>
</comment>
<comment type="similarity">
    <text evidence="7">Belongs to the nuclear hormone receptor family. NR0 subfamily.</text>
</comment>
<feature type="chain" id="PRO_0000232757" description="Nuclear receptor subfamily 0 group B member 2">
    <location>
        <begin position="1"/>
        <end position="260"/>
    </location>
</feature>
<feature type="domain" description="NR LBD" evidence="3">
    <location>
        <begin position="16"/>
        <end position="260"/>
    </location>
</feature>
<feature type="modified residue" description="Symmetric dimethylarginine; by PRMT5" evidence="2">
    <location>
        <position position="57"/>
    </location>
</feature>
<feature type="helix" evidence="8">
    <location>
        <begin position="20"/>
        <end position="25"/>
    </location>
</feature>
<feature type="helix" evidence="9">
    <location>
        <begin position="120"/>
        <end position="126"/>
    </location>
</feature>